<sequence>MAGELRIMENKSREDINLSPVSKIEIYSFFDPFSSDCFKLSAILSKLRIEYNQYIRIRHILNPSLKVLTKCQAQSTSNFDNIALAYKAAELQGRLRAERFIHLMQNEIIPKRDIITKSMICDCIQNAGIDLEVFKDDLQKSKLTESLKIDLHIAREMEIEQAPSLVFFSEDVHEEGLKVEGLYPYHIYTYIINELMGKPIEKNLPPKLETYIQQQQLVTMEELLTIYEWPEKLLNKELKKLAIQQKIEKLKYPDGDFWKSKMPKIKSK</sequence>
<gene>
    <name evidence="1" type="primary">spxH</name>
    <name type="ordered locus">SAR0969</name>
</gene>
<keyword id="KW-0963">Cytoplasm</keyword>
<protein>
    <recommendedName>
        <fullName evidence="1">ClpXP adapter protein SpxH</fullName>
    </recommendedName>
</protein>
<proteinExistence type="inferred from homology"/>
<accession>Q6GI84</accession>
<feature type="chain" id="PRO_0000278694" description="ClpXP adapter protein SpxH">
    <location>
        <begin position="1"/>
        <end position="268"/>
    </location>
</feature>
<organism>
    <name type="scientific">Staphylococcus aureus (strain MRSA252)</name>
    <dbReference type="NCBI Taxonomy" id="282458"/>
    <lineage>
        <taxon>Bacteria</taxon>
        <taxon>Bacillati</taxon>
        <taxon>Bacillota</taxon>
        <taxon>Bacilli</taxon>
        <taxon>Bacillales</taxon>
        <taxon>Staphylococcaceae</taxon>
        <taxon>Staphylococcus</taxon>
    </lineage>
</organism>
<comment type="function">
    <text evidence="1">Adapter protein required for efficient degradation of Spx by ClpXP under non-stress conditions. Interaction with Spx stabilizes Spx and exposes the C-terminus of Spx for recognition and proteolysis by ClpXP.</text>
</comment>
<comment type="subunit">
    <text evidence="1">Interacts with Spx.</text>
</comment>
<comment type="subcellular location">
    <subcellularLocation>
        <location evidence="1">Cytoplasm</location>
    </subcellularLocation>
</comment>
<comment type="similarity">
    <text evidence="1">Belongs to the SpxH family.</text>
</comment>
<evidence type="ECO:0000255" key="1">
    <source>
        <dbReference type="HAMAP-Rule" id="MF_02245"/>
    </source>
</evidence>
<dbReference type="EMBL" id="BX571856">
    <property type="protein sequence ID" value="CAG39974.1"/>
    <property type="molecule type" value="Genomic_DNA"/>
</dbReference>
<dbReference type="SMR" id="Q6GI84"/>
<dbReference type="KEGG" id="sar:SAR0969"/>
<dbReference type="HOGENOM" id="CLU_069785_0_0_9"/>
<dbReference type="Proteomes" id="UP000000596">
    <property type="component" value="Chromosome"/>
</dbReference>
<dbReference type="GO" id="GO:0005737">
    <property type="term" value="C:cytoplasm"/>
    <property type="evidence" value="ECO:0007669"/>
    <property type="project" value="UniProtKB-SubCell"/>
</dbReference>
<dbReference type="Gene3D" id="3.40.30.10">
    <property type="entry name" value="Glutaredoxin"/>
    <property type="match status" value="1"/>
</dbReference>
<dbReference type="HAMAP" id="MF_02245">
    <property type="entry name" value="Adapter_SpxH"/>
    <property type="match status" value="1"/>
</dbReference>
<dbReference type="InterPro" id="IPR046404">
    <property type="entry name" value="Adapter_SpxH"/>
</dbReference>
<dbReference type="InterPro" id="IPR036249">
    <property type="entry name" value="Thioredoxin-like_sf"/>
</dbReference>
<dbReference type="PANTHER" id="PTHR13887:SF47">
    <property type="entry name" value="CLPXP ADAPTER PROTEIN SPXH"/>
    <property type="match status" value="1"/>
</dbReference>
<dbReference type="PANTHER" id="PTHR13887">
    <property type="entry name" value="GLUTATHIONE S-TRANSFERASE KAPPA"/>
    <property type="match status" value="1"/>
</dbReference>
<dbReference type="Pfam" id="PF13743">
    <property type="entry name" value="Thioredoxin_5"/>
    <property type="match status" value="1"/>
</dbReference>
<dbReference type="SUPFAM" id="SSF52833">
    <property type="entry name" value="Thioredoxin-like"/>
    <property type="match status" value="1"/>
</dbReference>
<name>SPXH_STAAR</name>
<reference key="1">
    <citation type="journal article" date="2004" name="Proc. Natl. Acad. Sci. U.S.A.">
        <title>Complete genomes of two clinical Staphylococcus aureus strains: evidence for the rapid evolution of virulence and drug resistance.</title>
        <authorList>
            <person name="Holden M.T.G."/>
            <person name="Feil E.J."/>
            <person name="Lindsay J.A."/>
            <person name="Peacock S.J."/>
            <person name="Day N.P.J."/>
            <person name="Enright M.C."/>
            <person name="Foster T.J."/>
            <person name="Moore C.E."/>
            <person name="Hurst L."/>
            <person name="Atkin R."/>
            <person name="Barron A."/>
            <person name="Bason N."/>
            <person name="Bentley S.D."/>
            <person name="Chillingworth C."/>
            <person name="Chillingworth T."/>
            <person name="Churcher C."/>
            <person name="Clark L."/>
            <person name="Corton C."/>
            <person name="Cronin A."/>
            <person name="Doggett J."/>
            <person name="Dowd L."/>
            <person name="Feltwell T."/>
            <person name="Hance Z."/>
            <person name="Harris B."/>
            <person name="Hauser H."/>
            <person name="Holroyd S."/>
            <person name="Jagels K."/>
            <person name="James K.D."/>
            <person name="Lennard N."/>
            <person name="Line A."/>
            <person name="Mayes R."/>
            <person name="Moule S."/>
            <person name="Mungall K."/>
            <person name="Ormond D."/>
            <person name="Quail M.A."/>
            <person name="Rabbinowitsch E."/>
            <person name="Rutherford K.M."/>
            <person name="Sanders M."/>
            <person name="Sharp S."/>
            <person name="Simmonds M."/>
            <person name="Stevens K."/>
            <person name="Whitehead S."/>
            <person name="Barrell B.G."/>
            <person name="Spratt B.G."/>
            <person name="Parkhill J."/>
        </authorList>
    </citation>
    <scope>NUCLEOTIDE SEQUENCE [LARGE SCALE GENOMIC DNA]</scope>
    <source>
        <strain>MRSA252</strain>
    </source>
</reference>